<protein>
    <recommendedName>
        <fullName evidence="1">Phage tubulin-like protein</fullName>
        <shortName evidence="1">PhuZ</shortName>
        <ecNumber evidence="1">3.6.5.-</ecNumber>
    </recommendedName>
    <alternativeName>
        <fullName evidence="1">Phage tubulin/FtsZ</fullName>
    </alternativeName>
    <alternativeName>
        <fullName evidence="1">Tubulin-like protein TubZ</fullName>
    </alternativeName>
</protein>
<name>PHUZ_BPPA3</name>
<gene>
    <name evidence="6" type="primary">028</name>
</gene>
<reference key="1">
    <citation type="journal article" date="2011" name="Microbiology">
        <title>The Pseudomonas aeruginosa generalized transducing phage phiPA3 is a new member of the phiKZ-like group of 'jumbo' phages, and infects model laboratory strains and clinical isolates from cystic fibrosis patients.</title>
        <authorList>
            <person name="Monson R."/>
            <person name="Foulds I."/>
            <person name="Foweraker J."/>
            <person name="Welch M."/>
            <person name="Salmond G.P."/>
        </authorList>
    </citation>
    <scope>NUCLEOTIDE SEQUENCE [GENOMIC DNA]</scope>
</reference>
<reference key="2">
    <citation type="journal article" date="2017" name="Cell Rep.">
        <title>The Phage Nucleus and Tubulin Spindle Are Conserved among Large Pseudomonas Phages.</title>
        <authorList>
            <person name="Chaikeeratisak V."/>
            <person name="Nguyen K."/>
            <person name="Egan M.E."/>
            <person name="Erb M.L."/>
            <person name="Vavilina A."/>
            <person name="Pogliano J."/>
        </authorList>
    </citation>
    <scope>FUNCTION</scope>
    <scope>SUBCELLULAR LOCATION</scope>
</reference>
<reference key="3">
    <citation type="journal article" date="2019" name="Cell">
        <title>Viral Capsid Trafficking along Treadmilling Tubulin Filaments in Bacteria.</title>
        <authorList>
            <person name="Chaikeeratisak V."/>
            <person name="Khanna K."/>
            <person name="Nguyen K.T."/>
            <person name="Sugie J."/>
            <person name="Egan M.E."/>
            <person name="Erb M.L."/>
            <person name="Vavilina A."/>
            <person name="Nonejuie P."/>
            <person name="Nieweglowska E."/>
            <person name="Pogliano K."/>
            <person name="Agard D.A."/>
            <person name="Villa E."/>
            <person name="Pogliano J."/>
        </authorList>
    </citation>
    <scope>FUNCTION</scope>
    <scope>SUBCELLULAR LOCATION</scope>
    <scope>MUTAGENESIS OF ASP-190</scope>
</reference>
<accession>F8SJR0</accession>
<keyword id="KW-0342">GTP-binding</keyword>
<keyword id="KW-1035">Host cytoplasm</keyword>
<keyword id="KW-0378">Hydrolase</keyword>
<keyword id="KW-0547">Nucleotide-binding</keyword>
<keyword id="KW-1185">Reference proteome</keyword>
<proteinExistence type="evidence at protein level"/>
<comment type="function">
    <text evidence="1 3 5">A tubulin-like GTPase that forms filaments, which are required for positioning viral DNA and capsids in the middle of the host cell for optimal replication (PubMed:31199917). The motor component of a partition system which pushes phage DNA (encased by protein gp105) to the center of the bacterial host cell (By similarity). Also required for movement of phage capsids to the vicinity of the DNA and rotation of the encased viral DNA at midcell (By similarity). Forms filaments during the lytic phase, which position phage DNA at the center of the bacterial host cell (PubMed:31199917). Filaments have a three-stranded intertwined architecture and form a spindle-like cytoskeleton within the infected cell (By similarity). Has GTPase activity (By similarity). Filaments grow at the plus end and depolymerize at the minus end, a process called treadmilling, and switch from growing in a polar manner to catastrophic depolymerization, i.e. they display dynamic instability, like tubulin (By similarity). In infected host cells the filament ends close to the cell pole are relatively stable, while the other end near the phage DNA is highly dynamic (By similarity). Both capsid movement and DNA rotation probably require treadmilling (Probable).</text>
</comment>
<comment type="catalytic activity">
    <reaction evidence="1">
        <text>GTP + H2O = GDP + phosphate + H(+)</text>
        <dbReference type="Rhea" id="RHEA:19669"/>
        <dbReference type="ChEBI" id="CHEBI:15377"/>
        <dbReference type="ChEBI" id="CHEBI:15378"/>
        <dbReference type="ChEBI" id="CHEBI:37565"/>
        <dbReference type="ChEBI" id="CHEBI:43474"/>
        <dbReference type="ChEBI" id="CHEBI:58189"/>
    </reaction>
</comment>
<comment type="activity regulation">
    <text evidence="1">The non-hydrolyzable GTP analog GMPCPP stabilizes filaments, which never disassemble.</text>
</comment>
<comment type="subunit">
    <text evidence="1">Homomultimer. Polymerizes in a strictly GTP-dependent manner.</text>
</comment>
<comment type="subcellular location">
    <subcellularLocation>
        <location evidence="3">Host cytoplasm</location>
    </subcellularLocation>
    <text evidence="3">In infected host cells forms a spindle-like structure emanating from each cell pole.</text>
</comment>
<comment type="domain">
    <text evidence="1">Consists of two domains: a nucleotide-binding N-terminus that hydrolyzes GTP and a C-terminus domain necessary for polymerization. The domains are bridged by a long, central helix. Interactions between the C-terminus and the following monomer drive polymerization.</text>
</comment>
<comment type="similarity">
    <text evidence="4">Belongs to the FtsZ family. PhuZ subfamily.</text>
</comment>
<evidence type="ECO:0000250" key="1">
    <source>
        <dbReference type="UniProtKB" id="B3FK34"/>
    </source>
</evidence>
<evidence type="ECO:0000250" key="2">
    <source>
        <dbReference type="UniProtKB" id="Q8KNP3"/>
    </source>
</evidence>
<evidence type="ECO:0000269" key="3">
    <source>
    </source>
</evidence>
<evidence type="ECO:0000305" key="4"/>
<evidence type="ECO:0000305" key="5">
    <source>
    </source>
</evidence>
<evidence type="ECO:0000312" key="6">
    <source>
        <dbReference type="EMBL" id="AEH03455.1"/>
    </source>
</evidence>
<organismHost>
    <name type="scientific">Pseudomonas aeruginosa</name>
    <dbReference type="NCBI Taxonomy" id="287"/>
</organismHost>
<feature type="chain" id="PRO_0000448588" description="Phage tubulin-like protein">
    <location>
        <begin position="1"/>
        <end position="315"/>
    </location>
</feature>
<feature type="binding site" evidence="2">
    <location>
        <begin position="13"/>
        <end position="14"/>
    </location>
    <ligand>
        <name>GTP</name>
        <dbReference type="ChEBI" id="CHEBI:37565"/>
    </ligand>
</feature>
<feature type="binding site" evidence="2">
    <location>
        <begin position="93"/>
        <end position="95"/>
    </location>
    <ligand>
        <name>GTP</name>
        <dbReference type="ChEBI" id="CHEBI:37565"/>
    </ligand>
</feature>
<feature type="site" description="GTP hydrolysis" evidence="1">
    <location>
        <position position="187"/>
    </location>
</feature>
<feature type="site" description="GTP hydrolysis" evidence="1">
    <location>
        <position position="190"/>
    </location>
</feature>
<feature type="mutagenesis site" description="Complete loss of ability to position viral DNA and capsids in the middle of the host cell." evidence="3">
    <original>D</original>
    <variation>A</variation>
    <location>
        <position position="190"/>
    </location>
</feature>
<sequence length="315" mass="34453">MSKVKTRVYCCGGTGMDIGVNLQWHPDLVFIDTCDKNVTADHDLERVFLTEGTRGAGKNRRYMLPIIRPQVPGFLERYPAGDFNIVVFGLGGGSGSTIGPVIVSELAKAGESVAVVCMSGIEATEVLQNDIDTLKTLEGIAAATNTPVVINHIENVNGVPYTELDKEAIFNIHALINLTSQKHVRLDKLDIDNWINFTKKHNQIQPQLCQLHISNNRQEATSVPEPIAIASLFADASREVAFGTPFVRTVGISDVSDPDLLADQLHFVINSIGVASLFGSLTKQKQELEAAQVRYQQRNAIIDIDDNRTDDGFVV</sequence>
<organism>
    <name type="scientific">Pseudomonas phage PhiPA3</name>
    <name type="common">Pseudomonas aeruginosa phage PhiPA3</name>
    <dbReference type="NCBI Taxonomy" id="998086"/>
    <lineage>
        <taxon>Viruses</taxon>
        <taxon>Duplodnaviria</taxon>
        <taxon>Heunggongvirae</taxon>
        <taxon>Uroviricota</taxon>
        <taxon>Caudoviricetes</taxon>
        <taxon>Miltoncavirus</taxon>
        <taxon>Miltoncavirus PhiPA3</taxon>
    </lineage>
</organism>
<dbReference type="EC" id="3.6.5.-" evidence="1"/>
<dbReference type="EMBL" id="HQ630627">
    <property type="protein sequence ID" value="AEH03455.1"/>
    <property type="molecule type" value="Genomic_DNA"/>
</dbReference>
<dbReference type="RefSeq" id="YP_009217111.1">
    <property type="nucleotide sequence ID" value="NC_028999.1"/>
</dbReference>
<dbReference type="SMR" id="F8SJR0"/>
<dbReference type="DIP" id="DIP-60807N"/>
<dbReference type="GeneID" id="26643559"/>
<dbReference type="KEGG" id="vg:26643559"/>
<dbReference type="OrthoDB" id="31457at10239"/>
<dbReference type="Proteomes" id="UP000008388">
    <property type="component" value="Segment"/>
</dbReference>
<dbReference type="GO" id="GO:0030430">
    <property type="term" value="C:host cell cytoplasm"/>
    <property type="evidence" value="ECO:0007669"/>
    <property type="project" value="UniProtKB-SubCell"/>
</dbReference>
<dbReference type="GO" id="GO:0005525">
    <property type="term" value="F:GTP binding"/>
    <property type="evidence" value="ECO:0007669"/>
    <property type="project" value="UniProtKB-KW"/>
</dbReference>
<dbReference type="GO" id="GO:0003924">
    <property type="term" value="F:GTPase activity"/>
    <property type="evidence" value="ECO:0007669"/>
    <property type="project" value="RHEA"/>
</dbReference>
<dbReference type="Gene3D" id="3.40.50.1440">
    <property type="entry name" value="Tubulin/FtsZ, GTPase domain"/>
    <property type="match status" value="1"/>
</dbReference>
<dbReference type="InterPro" id="IPR054768">
    <property type="entry name" value="PhuZ_C"/>
</dbReference>
<dbReference type="InterPro" id="IPR036525">
    <property type="entry name" value="Tubulin/FtsZ_GTPase_sf"/>
</dbReference>
<dbReference type="Pfam" id="PF22334">
    <property type="entry name" value="TubZ_C_2"/>
    <property type="match status" value="1"/>
</dbReference>
<dbReference type="SUPFAM" id="SSF52490">
    <property type="entry name" value="Tubulin nucleotide-binding domain-like"/>
    <property type="match status" value="1"/>
</dbReference>